<feature type="chain" id="PRO_0000115126" description="DNA mismatch repair protein MutS">
    <location>
        <begin position="1"/>
        <end position="916"/>
    </location>
</feature>
<feature type="binding site" evidence="2">
    <location>
        <begin position="665"/>
        <end position="672"/>
    </location>
    <ligand>
        <name>ATP</name>
        <dbReference type="ChEBI" id="CHEBI:30616"/>
    </ligand>
</feature>
<protein>
    <recommendedName>
        <fullName>DNA mismatch repair protein MutS</fullName>
    </recommendedName>
</protein>
<name>MUTS_RHIME</name>
<proteinExistence type="inferred from homology"/>
<keyword id="KW-0067">ATP-binding</keyword>
<keyword id="KW-0227">DNA damage</keyword>
<keyword id="KW-0234">DNA repair</keyword>
<keyword id="KW-0238">DNA-binding</keyword>
<keyword id="KW-0547">Nucleotide-binding</keyword>
<keyword id="KW-1185">Reference proteome</keyword>
<gene>
    <name type="primary">mutS</name>
    <name type="ordered locus">R00395</name>
    <name type="ORF">SMc01125</name>
</gene>
<organism>
    <name type="scientific">Rhizobium meliloti (strain 1021)</name>
    <name type="common">Ensifer meliloti</name>
    <name type="synonym">Sinorhizobium meliloti</name>
    <dbReference type="NCBI Taxonomy" id="266834"/>
    <lineage>
        <taxon>Bacteria</taxon>
        <taxon>Pseudomonadati</taxon>
        <taxon>Pseudomonadota</taxon>
        <taxon>Alphaproteobacteria</taxon>
        <taxon>Hyphomicrobiales</taxon>
        <taxon>Rhizobiaceae</taxon>
        <taxon>Sinorhizobium/Ensifer group</taxon>
        <taxon>Sinorhizobium</taxon>
    </lineage>
</organism>
<reference key="1">
    <citation type="journal article" date="2001" name="Proc. Natl. Acad. Sci. U.S.A.">
        <title>Analysis of the chromosome sequence of the legume symbiont Sinorhizobium meliloti strain 1021.</title>
        <authorList>
            <person name="Capela D."/>
            <person name="Barloy-Hubler F."/>
            <person name="Gouzy J."/>
            <person name="Bothe G."/>
            <person name="Ampe F."/>
            <person name="Batut J."/>
            <person name="Boistard P."/>
            <person name="Becker A."/>
            <person name="Boutry M."/>
            <person name="Cadieu E."/>
            <person name="Dreano S."/>
            <person name="Gloux S."/>
            <person name="Godrie T."/>
            <person name="Goffeau A."/>
            <person name="Kahn D."/>
            <person name="Kiss E."/>
            <person name="Lelaure V."/>
            <person name="Masuy D."/>
            <person name="Pohl T."/>
            <person name="Portetelle D."/>
            <person name="Puehler A."/>
            <person name="Purnelle B."/>
            <person name="Ramsperger U."/>
            <person name="Renard C."/>
            <person name="Thebault P."/>
            <person name="Vandenbol M."/>
            <person name="Weidner S."/>
            <person name="Galibert F."/>
        </authorList>
    </citation>
    <scope>NUCLEOTIDE SEQUENCE [LARGE SCALE GENOMIC DNA]</scope>
    <source>
        <strain>1021</strain>
    </source>
</reference>
<reference key="2">
    <citation type="journal article" date="2001" name="Science">
        <title>The composite genome of the legume symbiont Sinorhizobium meliloti.</title>
        <authorList>
            <person name="Galibert F."/>
            <person name="Finan T.M."/>
            <person name="Long S.R."/>
            <person name="Puehler A."/>
            <person name="Abola P."/>
            <person name="Ampe F."/>
            <person name="Barloy-Hubler F."/>
            <person name="Barnett M.J."/>
            <person name="Becker A."/>
            <person name="Boistard P."/>
            <person name="Bothe G."/>
            <person name="Boutry M."/>
            <person name="Bowser L."/>
            <person name="Buhrmester J."/>
            <person name="Cadieu E."/>
            <person name="Capela D."/>
            <person name="Chain P."/>
            <person name="Cowie A."/>
            <person name="Davis R.W."/>
            <person name="Dreano S."/>
            <person name="Federspiel N.A."/>
            <person name="Fisher R.F."/>
            <person name="Gloux S."/>
            <person name="Godrie T."/>
            <person name="Goffeau A."/>
            <person name="Golding B."/>
            <person name="Gouzy J."/>
            <person name="Gurjal M."/>
            <person name="Hernandez-Lucas I."/>
            <person name="Hong A."/>
            <person name="Huizar L."/>
            <person name="Hyman R.W."/>
            <person name="Jones T."/>
            <person name="Kahn D."/>
            <person name="Kahn M.L."/>
            <person name="Kalman S."/>
            <person name="Keating D.H."/>
            <person name="Kiss E."/>
            <person name="Komp C."/>
            <person name="Lelaure V."/>
            <person name="Masuy D."/>
            <person name="Palm C."/>
            <person name="Peck M.C."/>
            <person name="Pohl T.M."/>
            <person name="Portetelle D."/>
            <person name="Purnelle B."/>
            <person name="Ramsperger U."/>
            <person name="Surzycki R."/>
            <person name="Thebault P."/>
            <person name="Vandenbol M."/>
            <person name="Vorhoelter F.J."/>
            <person name="Weidner S."/>
            <person name="Wells D.H."/>
            <person name="Wong K."/>
            <person name="Yeh K.-C."/>
            <person name="Batut J."/>
        </authorList>
    </citation>
    <scope>NUCLEOTIDE SEQUENCE [LARGE SCALE GENOMIC DNA]</scope>
    <source>
        <strain>1021</strain>
    </source>
</reference>
<reference key="3">
    <citation type="journal article" date="2001" name="J. Bacteriol.">
        <title>glnD and mviN are genes of an essential operon in Sinorhizobium meliloti.</title>
        <authorList>
            <person name="Rudnick P.A."/>
            <person name="Arcondeguy T."/>
            <person name="Kennedy C.K."/>
            <person name="Kahn D."/>
        </authorList>
    </citation>
    <scope>NUCLEOTIDE SEQUENCE [GENOMIC DNA] OF 566-916</scope>
</reference>
<dbReference type="EMBL" id="AL591688">
    <property type="protein sequence ID" value="CAC41832.1"/>
    <property type="molecule type" value="Genomic_DNA"/>
</dbReference>
<dbReference type="EMBL" id="AF227730">
    <property type="protein sequence ID" value="AAF37851.1"/>
    <property type="molecule type" value="Genomic_DNA"/>
</dbReference>
<dbReference type="RefSeq" id="NP_384501.1">
    <property type="nucleotide sequence ID" value="NC_003047.1"/>
</dbReference>
<dbReference type="RefSeq" id="WP_010968548.1">
    <property type="nucleotide sequence ID" value="NC_003047.1"/>
</dbReference>
<dbReference type="SMR" id="P56883"/>
<dbReference type="EnsemblBacteria" id="CAC41832">
    <property type="protein sequence ID" value="CAC41832"/>
    <property type="gene ID" value="SMc01125"/>
</dbReference>
<dbReference type="KEGG" id="sme:SMc01125"/>
<dbReference type="PATRIC" id="fig|266834.11.peg.1768"/>
<dbReference type="eggNOG" id="COG0249">
    <property type="taxonomic scope" value="Bacteria"/>
</dbReference>
<dbReference type="HOGENOM" id="CLU_002472_4_0_5"/>
<dbReference type="OrthoDB" id="9802448at2"/>
<dbReference type="Proteomes" id="UP000001976">
    <property type="component" value="Chromosome"/>
</dbReference>
<dbReference type="GO" id="GO:0005829">
    <property type="term" value="C:cytosol"/>
    <property type="evidence" value="ECO:0007669"/>
    <property type="project" value="TreeGrafter"/>
</dbReference>
<dbReference type="GO" id="GO:0005524">
    <property type="term" value="F:ATP binding"/>
    <property type="evidence" value="ECO:0007669"/>
    <property type="project" value="UniProtKB-UniRule"/>
</dbReference>
<dbReference type="GO" id="GO:0140664">
    <property type="term" value="F:ATP-dependent DNA damage sensor activity"/>
    <property type="evidence" value="ECO:0007669"/>
    <property type="project" value="InterPro"/>
</dbReference>
<dbReference type="GO" id="GO:0003684">
    <property type="term" value="F:damaged DNA binding"/>
    <property type="evidence" value="ECO:0007669"/>
    <property type="project" value="UniProtKB-UniRule"/>
</dbReference>
<dbReference type="GO" id="GO:0030983">
    <property type="term" value="F:mismatched DNA binding"/>
    <property type="evidence" value="ECO:0007669"/>
    <property type="project" value="InterPro"/>
</dbReference>
<dbReference type="GO" id="GO:0006298">
    <property type="term" value="P:mismatch repair"/>
    <property type="evidence" value="ECO:0007669"/>
    <property type="project" value="UniProtKB-UniRule"/>
</dbReference>
<dbReference type="CDD" id="cd03284">
    <property type="entry name" value="ABC_MutS1"/>
    <property type="match status" value="1"/>
</dbReference>
<dbReference type="FunFam" id="3.40.1170.10:FF:000001">
    <property type="entry name" value="DNA mismatch repair protein MutS"/>
    <property type="match status" value="1"/>
</dbReference>
<dbReference type="Gene3D" id="1.10.1420.10">
    <property type="match status" value="2"/>
</dbReference>
<dbReference type="Gene3D" id="6.10.140.430">
    <property type="match status" value="1"/>
</dbReference>
<dbReference type="Gene3D" id="3.40.1170.10">
    <property type="entry name" value="DNA repair protein MutS, domain I"/>
    <property type="match status" value="1"/>
</dbReference>
<dbReference type="Gene3D" id="3.30.420.110">
    <property type="entry name" value="MutS, connector domain"/>
    <property type="match status" value="1"/>
</dbReference>
<dbReference type="Gene3D" id="3.40.50.300">
    <property type="entry name" value="P-loop containing nucleotide triphosphate hydrolases"/>
    <property type="match status" value="1"/>
</dbReference>
<dbReference type="HAMAP" id="MF_00096">
    <property type="entry name" value="MutS"/>
    <property type="match status" value="1"/>
</dbReference>
<dbReference type="InterPro" id="IPR005748">
    <property type="entry name" value="DNA_mismatch_repair_MutS"/>
</dbReference>
<dbReference type="InterPro" id="IPR007695">
    <property type="entry name" value="DNA_mismatch_repair_MutS-lik_N"/>
</dbReference>
<dbReference type="InterPro" id="IPR017261">
    <property type="entry name" value="DNA_mismatch_repair_MutS/MSH"/>
</dbReference>
<dbReference type="InterPro" id="IPR000432">
    <property type="entry name" value="DNA_mismatch_repair_MutS_C"/>
</dbReference>
<dbReference type="InterPro" id="IPR007861">
    <property type="entry name" value="DNA_mismatch_repair_MutS_clamp"/>
</dbReference>
<dbReference type="InterPro" id="IPR007696">
    <property type="entry name" value="DNA_mismatch_repair_MutS_core"/>
</dbReference>
<dbReference type="InterPro" id="IPR016151">
    <property type="entry name" value="DNA_mismatch_repair_MutS_N"/>
</dbReference>
<dbReference type="InterPro" id="IPR036187">
    <property type="entry name" value="DNA_mismatch_repair_MutS_sf"/>
</dbReference>
<dbReference type="InterPro" id="IPR007860">
    <property type="entry name" value="DNA_mmatch_repair_MutS_con_dom"/>
</dbReference>
<dbReference type="InterPro" id="IPR045076">
    <property type="entry name" value="MutS"/>
</dbReference>
<dbReference type="InterPro" id="IPR036678">
    <property type="entry name" value="MutS_con_dom_sf"/>
</dbReference>
<dbReference type="InterPro" id="IPR027417">
    <property type="entry name" value="P-loop_NTPase"/>
</dbReference>
<dbReference type="NCBIfam" id="TIGR01070">
    <property type="entry name" value="mutS1"/>
    <property type="match status" value="1"/>
</dbReference>
<dbReference type="NCBIfam" id="NF003810">
    <property type="entry name" value="PRK05399.1"/>
    <property type="match status" value="1"/>
</dbReference>
<dbReference type="PANTHER" id="PTHR11361:SF34">
    <property type="entry name" value="DNA MISMATCH REPAIR PROTEIN MSH1, MITOCHONDRIAL"/>
    <property type="match status" value="1"/>
</dbReference>
<dbReference type="PANTHER" id="PTHR11361">
    <property type="entry name" value="DNA MISMATCH REPAIR PROTEIN MUTS FAMILY MEMBER"/>
    <property type="match status" value="1"/>
</dbReference>
<dbReference type="Pfam" id="PF01624">
    <property type="entry name" value="MutS_I"/>
    <property type="match status" value="1"/>
</dbReference>
<dbReference type="Pfam" id="PF05188">
    <property type="entry name" value="MutS_II"/>
    <property type="match status" value="1"/>
</dbReference>
<dbReference type="Pfam" id="PF05192">
    <property type="entry name" value="MutS_III"/>
    <property type="match status" value="1"/>
</dbReference>
<dbReference type="Pfam" id="PF05190">
    <property type="entry name" value="MutS_IV"/>
    <property type="match status" value="1"/>
</dbReference>
<dbReference type="Pfam" id="PF00488">
    <property type="entry name" value="MutS_V"/>
    <property type="match status" value="1"/>
</dbReference>
<dbReference type="PIRSF" id="PIRSF037677">
    <property type="entry name" value="DNA_mis_repair_Msh6"/>
    <property type="match status" value="1"/>
</dbReference>
<dbReference type="SMART" id="SM00534">
    <property type="entry name" value="MUTSac"/>
    <property type="match status" value="1"/>
</dbReference>
<dbReference type="SMART" id="SM00533">
    <property type="entry name" value="MUTSd"/>
    <property type="match status" value="1"/>
</dbReference>
<dbReference type="SUPFAM" id="SSF55271">
    <property type="entry name" value="DNA repair protein MutS, domain I"/>
    <property type="match status" value="1"/>
</dbReference>
<dbReference type="SUPFAM" id="SSF53150">
    <property type="entry name" value="DNA repair protein MutS, domain II"/>
    <property type="match status" value="1"/>
</dbReference>
<dbReference type="SUPFAM" id="SSF48334">
    <property type="entry name" value="DNA repair protein MutS, domain III"/>
    <property type="match status" value="1"/>
</dbReference>
<dbReference type="SUPFAM" id="SSF52540">
    <property type="entry name" value="P-loop containing nucleoside triphosphate hydrolases"/>
    <property type="match status" value="1"/>
</dbReference>
<dbReference type="PROSITE" id="PS00486">
    <property type="entry name" value="DNA_MISMATCH_REPAIR_2"/>
    <property type="match status" value="1"/>
</dbReference>
<accession>P56883</accession>
<comment type="function">
    <text evidence="1">This protein is involved in the repair of mismatches in DNA. It is possible that it carries out the mismatch recognition step. This protein has a weak ATPase activity (By similarity).</text>
</comment>
<comment type="similarity">
    <text evidence="3">Belongs to the DNA mismatch repair MutS family.</text>
</comment>
<evidence type="ECO:0000250" key="1"/>
<evidence type="ECO:0000255" key="2"/>
<evidence type="ECO:0000305" key="3"/>
<sequence length="916" mass="99182">MNFLMDASNRSGDVLSVSDLASEESRSTATPMMEQFIEIKANNPDSLLFYRMGDFYELFFQDAVEASRALGITLTKRGQHMGQEIPMCGVPVHAADDYLQKLIASGYRVAVCEQVEDPAEAKKRGSKSVVRRDVVRLVTPGTITEDKLLSPSESNYLMALARIRSGSEPAYALAWIDISTGIFRLAETAESRLLADILRIEPRELILPDTVFHDPDLRPVFDVLGRVAVPQPAVLFDSATAEGRISRYYGVGTLDGFGSFSRAELAAASAAVSYVEKTQLQERPALGIPERESAASTLFIDPATRANLELAKTLSGSRDGSLLKSLDRTMTSGGARLLAERLMSPLTDPERINQRLDSIEVLADQPRFTTDVRDALRRAPDMPRALSRLALGRGGPRDLGAIQAGMRAAAAISALLSGAELSAELTEARDAIAALPGELLARLDATLAEELPLLKRDGGFVREGASAELDEMRALRDQSRRVIAGLQLQYCEETGIKSLKIKHNNVLGYFIEVTAGNAGSMTDTDAGRARFIHRQTMANAMRFTTTELAELETKIANAADRALAIELETFEAMVREVVAEAEAIKAAALALATIDVSAGLAVLAEEQNYTRPTVDRSRMFAIDGGRHPVVEQALRRQAANPFVANGCDLSPPNGEQGGAIWLLTGPNMGGKSTFLRQNALIAIMAQTGSFVPAAAAHIGVVDRLFSRVGASDDLARGRSTFMVEMVETAAILNQATDRSLVILDEIGRGTATFDGLSIAWAAVEHLHEVNRCRGLFATHFHELTVLSEKLVRLSNATMRVKEWDGDVIFLHEVGPGAADRSYGIQVARLAGLPASVVARARDVLAKLEDADRKNPASQLIDDLPLFQVAVRREEAARASSGPSKVEEALKALNPDDMTPREALDALYALKKELSNR</sequence>